<keyword id="KW-1003">Cell membrane</keyword>
<keyword id="KW-0966">Cell projection</keyword>
<keyword id="KW-0175">Coiled coil</keyword>
<keyword id="KW-0963">Cytoplasm</keyword>
<keyword id="KW-0238">DNA-binding</keyword>
<keyword id="KW-0472">Membrane</keyword>
<keyword id="KW-0539">Nucleus</keyword>
<keyword id="KW-0597">Phosphoprotein</keyword>
<keyword id="KW-1185">Reference proteome</keyword>
<reference key="1">
    <citation type="journal article" date="2005" name="Genome Biol.">
        <title>Full-length cDNAs from chicken bursal lymphocytes to facilitate gene function analysis.</title>
        <authorList>
            <person name="Caldwell R.B."/>
            <person name="Kierzek A.M."/>
            <person name="Arakawa H."/>
            <person name="Bezzubov Y."/>
            <person name="Zaim J."/>
            <person name="Fiedler P."/>
            <person name="Kutter S."/>
            <person name="Blagodatski A."/>
            <person name="Kostovska D."/>
            <person name="Koter M."/>
            <person name="Plachy J."/>
            <person name="Carninci P."/>
            <person name="Hayashizaki Y."/>
            <person name="Buerstedde J.-M."/>
        </authorList>
    </citation>
    <scope>NUCLEOTIDE SEQUENCE [LARGE SCALE MRNA]</scope>
    <source>
        <strain>CB</strain>
        <tissue>Bursa of Fabricius</tissue>
    </source>
</reference>
<accession>Q5F4B2</accession>
<accession>Q5ZL29</accession>
<gene>
    <name type="primary">SWAP70</name>
    <name type="ORF">RCJMB04_1e1</name>
    <name type="ORF">RCJMB04_8b3</name>
</gene>
<name>SWP70_CHICK</name>
<evidence type="ECO:0000250" key="1"/>
<evidence type="ECO:0000255" key="2"/>
<evidence type="ECO:0000255" key="3">
    <source>
        <dbReference type="PROSITE-ProRule" id="PRU00145"/>
    </source>
</evidence>
<evidence type="ECO:0000305" key="4"/>
<sequence length="586" mass="68411">MVGLKEELLKAIWHAFTALDLDRSGKVSKSQLKVLSHNLCTVLNVPHDPVALEEHFRDDDEGPVSNQGYMPYLNKFILEKVQGNFDKVEFNRMCWTLCAKKNLSKSPLLISDEDAFKVWVIFNFLSEDKYPLIIVPEEVEYLLKKLTEAMGAGWQQEQFDLYKIALNTSREGLSAWELIDLIGSGQFSKGMDRQTVSMAINEVFNELILDVLKQGYMLKKGHKRKNWTERWFVLKPNIISYYVSEDLKDKKGDIILDGNCCVEPLPDKDGKKCLFLIKCLDKSFEISASDKKKKQEWIQAIQTTVSLLRAGSPPPHKEARQKRKELRQKLLAEQEELERQMKELQTANENKQKELETVRKQLEAAAARAAEEEKKRLQTQVELQDRFSLELEREKMVRQKMEEQVAQKSSELEQYLQRVRELEEMYKQLQEALEVEKQARQDEETVRKLQARLLEEESAKRAELEKWHLQQQQTIQMTEAEKQELENQRMIKEQALQVAMQQLEQLELERKEALEQYEEVKKKLETAANNTRSWKDKVAHHEGLIRLIEPGSKNPHLITNWGPAAFTEAELEQRQKSWKGKKASSE</sequence>
<comment type="function">
    <text evidence="1">Phosphatidylinositol 3,4,5-trisphosphate-dependent guanine nucleotide exchange factor (GEF) which, independently of RAS, transduces signals from tyrosine kinase receptors to RAC. It also mediates signaling of membrane ruffling. Regulates the actin cytoskeleton as an effector or adapter protein in response to agonist stimulated phosphatidylinositol (3,4)-bisphosphate production and cell protrusion (By similarity).</text>
</comment>
<comment type="subunit">
    <text evidence="1">The SWAP complex consists of NPM1, NCL, PARP1 and SWAP70.</text>
</comment>
<comment type="subcellular location">
    <subcellularLocation>
        <location evidence="1">Cytoplasm</location>
    </subcellularLocation>
    <subcellularLocation>
        <location evidence="1">Cell membrane</location>
    </subcellularLocation>
    <subcellularLocation>
        <location evidence="1">Nucleus</location>
    </subcellularLocation>
    <subcellularLocation>
        <location evidence="1">Cell projection</location>
        <location evidence="1">Lamellipodium</location>
    </subcellularLocation>
    <text evidence="1">In resting B-cells it is localized mainly in the cytoplasm and upon cell activation it is recruited to the plasma membrane and then translocates to the nucleus. In activated, class-switching B-cells it is associated with membrane IgG but not IgM. Localized to loose actin filament arrays located behind actively extending lamellipodia (By similarity).</text>
</comment>
<comment type="domain">
    <text evidence="1">The PH domain is essential for phosphatidylinositol 3,4,5-trisphosphate binding.</text>
</comment>
<comment type="PTM">
    <text evidence="1">Tyrosine-phosphorylated.</text>
</comment>
<comment type="sequence caution" evidence="4">
    <conflict type="frameshift">
        <sequence resource="EMBL-CDS" id="CAG31564"/>
    </conflict>
</comment>
<protein>
    <recommendedName>
        <fullName>Switch-associated protein 70</fullName>
        <shortName>SWAP-70</shortName>
    </recommendedName>
</protein>
<feature type="chain" id="PRO_0000240282" description="Switch-associated protein 70">
    <location>
        <begin position="1"/>
        <end position="586"/>
    </location>
</feature>
<feature type="domain" description="PH" evidence="3">
    <location>
        <begin position="210"/>
        <end position="306"/>
    </location>
</feature>
<feature type="coiled-coil region" evidence="2">
    <location>
        <begin position="316"/>
        <end position="538"/>
    </location>
</feature>
<feature type="sequence conflict" description="In Ref. 1; CAG31564." evidence="4" ref="1">
    <original>V</original>
    <variation>I</variation>
    <location>
        <position position="139"/>
    </location>
</feature>
<feature type="sequence conflict" description="In Ref. 1; CAG31564." evidence="4" ref="1">
    <original>P</original>
    <variation>R</variation>
    <location>
        <position position="264"/>
    </location>
</feature>
<organism>
    <name type="scientific">Gallus gallus</name>
    <name type="common">Chicken</name>
    <dbReference type="NCBI Taxonomy" id="9031"/>
    <lineage>
        <taxon>Eukaryota</taxon>
        <taxon>Metazoa</taxon>
        <taxon>Chordata</taxon>
        <taxon>Craniata</taxon>
        <taxon>Vertebrata</taxon>
        <taxon>Euteleostomi</taxon>
        <taxon>Archelosauria</taxon>
        <taxon>Archosauria</taxon>
        <taxon>Dinosauria</taxon>
        <taxon>Saurischia</taxon>
        <taxon>Theropoda</taxon>
        <taxon>Coelurosauria</taxon>
        <taxon>Aves</taxon>
        <taxon>Neognathae</taxon>
        <taxon>Galloanserae</taxon>
        <taxon>Galliformes</taxon>
        <taxon>Phasianidae</taxon>
        <taxon>Phasianinae</taxon>
        <taxon>Gallus</taxon>
    </lineage>
</organism>
<dbReference type="EMBL" id="AJ719905">
    <property type="protein sequence ID" value="CAG31564.1"/>
    <property type="status" value="ALT_FRAME"/>
    <property type="molecule type" value="mRNA"/>
</dbReference>
<dbReference type="EMBL" id="AJ851388">
    <property type="protein sequence ID" value="CAH65022.1"/>
    <property type="molecule type" value="mRNA"/>
</dbReference>
<dbReference type="RefSeq" id="NP_001026351.1">
    <property type="nucleotide sequence ID" value="NM_001031180.1"/>
</dbReference>
<dbReference type="SMR" id="Q5F4B2"/>
<dbReference type="FunCoup" id="Q5F4B2">
    <property type="interactions" value="917"/>
</dbReference>
<dbReference type="STRING" id="9031.ENSGALP00000009219"/>
<dbReference type="PaxDb" id="9031-ENSGALP00000009219"/>
<dbReference type="GeneID" id="423044"/>
<dbReference type="KEGG" id="gga:423044"/>
<dbReference type="CTD" id="23075"/>
<dbReference type="VEuPathDB" id="HostDB:geneid_423044"/>
<dbReference type="eggNOG" id="ENOG502QSXX">
    <property type="taxonomic scope" value="Eukaryota"/>
</dbReference>
<dbReference type="InParanoid" id="Q5F4B2"/>
<dbReference type="OrthoDB" id="8434295at2759"/>
<dbReference type="PhylomeDB" id="Q5F4B2"/>
<dbReference type="PRO" id="PR:Q5F4B2"/>
<dbReference type="Proteomes" id="UP000000539">
    <property type="component" value="Unassembled WGS sequence"/>
</dbReference>
<dbReference type="GO" id="GO:0005737">
    <property type="term" value="C:cytoplasm"/>
    <property type="evidence" value="ECO:0000318"/>
    <property type="project" value="GO_Central"/>
</dbReference>
<dbReference type="GO" id="GO:0030027">
    <property type="term" value="C:lamellipodium"/>
    <property type="evidence" value="ECO:0007669"/>
    <property type="project" value="UniProtKB-SubCell"/>
</dbReference>
<dbReference type="GO" id="GO:0005634">
    <property type="term" value="C:nucleus"/>
    <property type="evidence" value="ECO:0000318"/>
    <property type="project" value="GO_Central"/>
</dbReference>
<dbReference type="GO" id="GO:0005886">
    <property type="term" value="C:plasma membrane"/>
    <property type="evidence" value="ECO:0007669"/>
    <property type="project" value="UniProtKB-SubCell"/>
</dbReference>
<dbReference type="GO" id="GO:0003677">
    <property type="term" value="F:DNA binding"/>
    <property type="evidence" value="ECO:0007669"/>
    <property type="project" value="UniProtKB-KW"/>
</dbReference>
<dbReference type="CDD" id="cd13273">
    <property type="entry name" value="PH_SWAP-70"/>
    <property type="match status" value="1"/>
</dbReference>
<dbReference type="FunFam" id="2.30.29.30:FF:000175">
    <property type="entry name" value="switch-associated protein 70 isoform X2"/>
    <property type="match status" value="1"/>
</dbReference>
<dbReference type="Gene3D" id="2.30.29.30">
    <property type="entry name" value="Pleckstrin-homology domain (PH domain)/Phosphotyrosine-binding domain (PTB)"/>
    <property type="match status" value="1"/>
</dbReference>
<dbReference type="InterPro" id="IPR011992">
    <property type="entry name" value="EF-hand-dom_pair"/>
</dbReference>
<dbReference type="InterPro" id="IPR011993">
    <property type="entry name" value="PH-like_dom_sf"/>
</dbReference>
<dbReference type="InterPro" id="IPR001849">
    <property type="entry name" value="PH_domain"/>
</dbReference>
<dbReference type="PANTHER" id="PTHR14383">
    <property type="entry name" value="SWAP-70 RECOMBINASE"/>
    <property type="match status" value="1"/>
</dbReference>
<dbReference type="PANTHER" id="PTHR14383:SF6">
    <property type="entry name" value="SWITCH-ASSOCIATED PROTEIN 70"/>
    <property type="match status" value="1"/>
</dbReference>
<dbReference type="Pfam" id="PF00169">
    <property type="entry name" value="PH"/>
    <property type="match status" value="1"/>
</dbReference>
<dbReference type="SMART" id="SM00233">
    <property type="entry name" value="PH"/>
    <property type="match status" value="1"/>
</dbReference>
<dbReference type="SUPFAM" id="SSF47473">
    <property type="entry name" value="EF-hand"/>
    <property type="match status" value="1"/>
</dbReference>
<dbReference type="SUPFAM" id="SSF50729">
    <property type="entry name" value="PH domain-like"/>
    <property type="match status" value="1"/>
</dbReference>
<dbReference type="PROSITE" id="PS50003">
    <property type="entry name" value="PH_DOMAIN"/>
    <property type="match status" value="1"/>
</dbReference>
<proteinExistence type="evidence at transcript level"/>